<accession>Q6DAV5</accession>
<dbReference type="EMBL" id="BX950851">
    <property type="protein sequence ID" value="CAG73067.1"/>
    <property type="molecule type" value="Genomic_DNA"/>
</dbReference>
<dbReference type="RefSeq" id="WP_002208990.1">
    <property type="nucleotide sequence ID" value="NC_004547.2"/>
</dbReference>
<dbReference type="SMR" id="Q6DAV5"/>
<dbReference type="STRING" id="218491.ECA0147"/>
<dbReference type="GeneID" id="96663532"/>
<dbReference type="KEGG" id="eca:ECA0147"/>
<dbReference type="eggNOG" id="COG0267">
    <property type="taxonomic scope" value="Bacteria"/>
</dbReference>
<dbReference type="HOGENOM" id="CLU_190949_1_1_6"/>
<dbReference type="OrthoDB" id="21586at2"/>
<dbReference type="Proteomes" id="UP000007966">
    <property type="component" value="Chromosome"/>
</dbReference>
<dbReference type="GO" id="GO:0022625">
    <property type="term" value="C:cytosolic large ribosomal subunit"/>
    <property type="evidence" value="ECO:0007669"/>
    <property type="project" value="TreeGrafter"/>
</dbReference>
<dbReference type="GO" id="GO:0003735">
    <property type="term" value="F:structural constituent of ribosome"/>
    <property type="evidence" value="ECO:0007669"/>
    <property type="project" value="InterPro"/>
</dbReference>
<dbReference type="GO" id="GO:0006412">
    <property type="term" value="P:translation"/>
    <property type="evidence" value="ECO:0007669"/>
    <property type="project" value="UniProtKB-UniRule"/>
</dbReference>
<dbReference type="FunFam" id="2.20.28.120:FF:000001">
    <property type="entry name" value="50S ribosomal protein L33"/>
    <property type="match status" value="1"/>
</dbReference>
<dbReference type="Gene3D" id="2.20.28.120">
    <property type="entry name" value="Ribosomal protein L33"/>
    <property type="match status" value="1"/>
</dbReference>
<dbReference type="HAMAP" id="MF_00294">
    <property type="entry name" value="Ribosomal_bL33"/>
    <property type="match status" value="1"/>
</dbReference>
<dbReference type="InterPro" id="IPR001705">
    <property type="entry name" value="Ribosomal_bL33"/>
</dbReference>
<dbReference type="InterPro" id="IPR018264">
    <property type="entry name" value="Ribosomal_bL33_CS"/>
</dbReference>
<dbReference type="InterPro" id="IPR038584">
    <property type="entry name" value="Ribosomal_bL33_sf"/>
</dbReference>
<dbReference type="InterPro" id="IPR011332">
    <property type="entry name" value="Ribosomal_zn-bd"/>
</dbReference>
<dbReference type="NCBIfam" id="NF001860">
    <property type="entry name" value="PRK00595.1"/>
    <property type="match status" value="1"/>
</dbReference>
<dbReference type="NCBIfam" id="TIGR01023">
    <property type="entry name" value="rpmG_bact"/>
    <property type="match status" value="1"/>
</dbReference>
<dbReference type="PANTHER" id="PTHR15238">
    <property type="entry name" value="54S RIBOSOMAL PROTEIN L39, MITOCHONDRIAL"/>
    <property type="match status" value="1"/>
</dbReference>
<dbReference type="PANTHER" id="PTHR15238:SF1">
    <property type="entry name" value="LARGE RIBOSOMAL SUBUNIT PROTEIN BL33M"/>
    <property type="match status" value="1"/>
</dbReference>
<dbReference type="Pfam" id="PF00471">
    <property type="entry name" value="Ribosomal_L33"/>
    <property type="match status" value="1"/>
</dbReference>
<dbReference type="SUPFAM" id="SSF57829">
    <property type="entry name" value="Zn-binding ribosomal proteins"/>
    <property type="match status" value="1"/>
</dbReference>
<dbReference type="PROSITE" id="PS00582">
    <property type="entry name" value="RIBOSOMAL_L33"/>
    <property type="match status" value="1"/>
</dbReference>
<feature type="chain" id="PRO_1000004167" description="Large ribosomal subunit protein bL33">
    <location>
        <begin position="1"/>
        <end position="55"/>
    </location>
</feature>
<keyword id="KW-1185">Reference proteome</keyword>
<keyword id="KW-0687">Ribonucleoprotein</keyword>
<keyword id="KW-0689">Ribosomal protein</keyword>
<reference key="1">
    <citation type="journal article" date="2004" name="Proc. Natl. Acad. Sci. U.S.A.">
        <title>Genome sequence of the enterobacterial phytopathogen Erwinia carotovora subsp. atroseptica and characterization of virulence factors.</title>
        <authorList>
            <person name="Bell K.S."/>
            <person name="Sebaihia M."/>
            <person name="Pritchard L."/>
            <person name="Holden M.T.G."/>
            <person name="Hyman L.J."/>
            <person name="Holeva M.C."/>
            <person name="Thomson N.R."/>
            <person name="Bentley S.D."/>
            <person name="Churcher L.J.C."/>
            <person name="Mungall K."/>
            <person name="Atkin R."/>
            <person name="Bason N."/>
            <person name="Brooks K."/>
            <person name="Chillingworth T."/>
            <person name="Clark K."/>
            <person name="Doggett J."/>
            <person name="Fraser A."/>
            <person name="Hance Z."/>
            <person name="Hauser H."/>
            <person name="Jagels K."/>
            <person name="Moule S."/>
            <person name="Norbertczak H."/>
            <person name="Ormond D."/>
            <person name="Price C."/>
            <person name="Quail M.A."/>
            <person name="Sanders M."/>
            <person name="Walker D."/>
            <person name="Whitehead S."/>
            <person name="Salmond G.P.C."/>
            <person name="Birch P.R.J."/>
            <person name="Parkhill J."/>
            <person name="Toth I.K."/>
        </authorList>
    </citation>
    <scope>NUCLEOTIDE SEQUENCE [LARGE SCALE GENOMIC DNA]</scope>
    <source>
        <strain>SCRI 1043 / ATCC BAA-672</strain>
    </source>
</reference>
<protein>
    <recommendedName>
        <fullName evidence="1">Large ribosomal subunit protein bL33</fullName>
    </recommendedName>
    <alternativeName>
        <fullName evidence="2">50S ribosomal protein L33</fullName>
    </alternativeName>
</protein>
<organism>
    <name type="scientific">Pectobacterium atrosepticum (strain SCRI 1043 / ATCC BAA-672)</name>
    <name type="common">Erwinia carotovora subsp. atroseptica</name>
    <dbReference type="NCBI Taxonomy" id="218491"/>
    <lineage>
        <taxon>Bacteria</taxon>
        <taxon>Pseudomonadati</taxon>
        <taxon>Pseudomonadota</taxon>
        <taxon>Gammaproteobacteria</taxon>
        <taxon>Enterobacterales</taxon>
        <taxon>Pectobacteriaceae</taxon>
        <taxon>Pectobacterium</taxon>
    </lineage>
</organism>
<evidence type="ECO:0000255" key="1">
    <source>
        <dbReference type="HAMAP-Rule" id="MF_00294"/>
    </source>
</evidence>
<evidence type="ECO:0000305" key="2"/>
<name>RL33_PECAS</name>
<proteinExistence type="inferred from homology"/>
<gene>
    <name evidence="1" type="primary">rpmG</name>
    <name type="ordered locus">ECA0147</name>
</gene>
<comment type="similarity">
    <text evidence="1">Belongs to the bacterial ribosomal protein bL33 family.</text>
</comment>
<sequence length="55" mass="6358">MAKGVREKIKLVSSAGTGHFYTTTKNKRTKPEKLELKKFDPVVRQHVLYKEAKIK</sequence>